<sequence length="102" mass="11690">MQKARIRLSGTDFEKIEMVCDRIKEIAERTGVNLAGPIPLPTKKLVVPTRKSPDGEGTATWDRWQMRVHKRLIDIDADERALRQLMRIQVPKDIGIEIVLES</sequence>
<reference key="1">
    <citation type="journal article" date="2009" name="Stand. Genomic Sci.">
        <title>Complete genome sequence of Methanoculleus marisnigri Romesser et al. 1981 type strain JR1.</title>
        <authorList>
            <person name="Anderson I.J."/>
            <person name="Sieprawska-Lupa M."/>
            <person name="Lapidus A."/>
            <person name="Nolan M."/>
            <person name="Copeland A."/>
            <person name="Glavina Del Rio T."/>
            <person name="Tice H."/>
            <person name="Dalin E."/>
            <person name="Barry K."/>
            <person name="Saunders E."/>
            <person name="Han C."/>
            <person name="Brettin T."/>
            <person name="Detter J.C."/>
            <person name="Bruce D."/>
            <person name="Mikhailova N."/>
            <person name="Pitluck S."/>
            <person name="Hauser L."/>
            <person name="Land M."/>
            <person name="Lucas S."/>
            <person name="Richardson P."/>
            <person name="Whitman W.B."/>
            <person name="Kyrpides N.C."/>
        </authorList>
    </citation>
    <scope>NUCLEOTIDE SEQUENCE [LARGE SCALE GENOMIC DNA]</scope>
    <source>
        <strain>ATCC 35101 / DSM 1498 / JR1</strain>
    </source>
</reference>
<gene>
    <name evidence="1" type="primary">rps10</name>
    <name type="ordered locus">Memar_0729</name>
</gene>
<proteinExistence type="inferred from homology"/>
<accession>A3CTG2</accession>
<comment type="function">
    <text evidence="1">Involved in the binding of tRNA to the ribosomes.</text>
</comment>
<comment type="subunit">
    <text evidence="1">Part of the 30S ribosomal subunit.</text>
</comment>
<comment type="similarity">
    <text evidence="1">Belongs to the universal ribosomal protein uS10 family.</text>
</comment>
<protein>
    <recommendedName>
        <fullName evidence="1">Small ribosomal subunit protein uS10</fullName>
    </recommendedName>
    <alternativeName>
        <fullName evidence="2">30S ribosomal protein S10</fullName>
    </alternativeName>
</protein>
<feature type="chain" id="PRO_1000015055" description="Small ribosomal subunit protein uS10">
    <location>
        <begin position="1"/>
        <end position="102"/>
    </location>
</feature>
<organism>
    <name type="scientific">Methanoculleus marisnigri (strain ATCC 35101 / DSM 1498 / JR1)</name>
    <dbReference type="NCBI Taxonomy" id="368407"/>
    <lineage>
        <taxon>Archaea</taxon>
        <taxon>Methanobacteriati</taxon>
        <taxon>Methanobacteriota</taxon>
        <taxon>Stenosarchaea group</taxon>
        <taxon>Methanomicrobia</taxon>
        <taxon>Methanomicrobiales</taxon>
        <taxon>Methanomicrobiaceae</taxon>
        <taxon>Methanoculleus</taxon>
    </lineage>
</organism>
<dbReference type="EMBL" id="CP000562">
    <property type="protein sequence ID" value="ABN56662.1"/>
    <property type="molecule type" value="Genomic_DNA"/>
</dbReference>
<dbReference type="SMR" id="A3CTG2"/>
<dbReference type="STRING" id="368407.Memar_0729"/>
<dbReference type="KEGG" id="mem:Memar_0729"/>
<dbReference type="eggNOG" id="arCOG01758">
    <property type="taxonomic scope" value="Archaea"/>
</dbReference>
<dbReference type="HOGENOM" id="CLU_122625_0_1_2"/>
<dbReference type="OrthoDB" id="371736at2157"/>
<dbReference type="Proteomes" id="UP000002146">
    <property type="component" value="Chromosome"/>
</dbReference>
<dbReference type="GO" id="GO:0015935">
    <property type="term" value="C:small ribosomal subunit"/>
    <property type="evidence" value="ECO:0007669"/>
    <property type="project" value="InterPro"/>
</dbReference>
<dbReference type="GO" id="GO:0003735">
    <property type="term" value="F:structural constituent of ribosome"/>
    <property type="evidence" value="ECO:0007669"/>
    <property type="project" value="InterPro"/>
</dbReference>
<dbReference type="GO" id="GO:0000049">
    <property type="term" value="F:tRNA binding"/>
    <property type="evidence" value="ECO:0007669"/>
    <property type="project" value="UniProtKB-UniRule"/>
</dbReference>
<dbReference type="GO" id="GO:0006412">
    <property type="term" value="P:translation"/>
    <property type="evidence" value="ECO:0007669"/>
    <property type="project" value="UniProtKB-UniRule"/>
</dbReference>
<dbReference type="FunFam" id="3.30.70.600:FF:000004">
    <property type="entry name" value="30S ribosomal protein S10"/>
    <property type="match status" value="1"/>
</dbReference>
<dbReference type="Gene3D" id="3.30.70.600">
    <property type="entry name" value="Ribosomal protein S10 domain"/>
    <property type="match status" value="1"/>
</dbReference>
<dbReference type="HAMAP" id="MF_00508">
    <property type="entry name" value="Ribosomal_uS10"/>
    <property type="match status" value="1"/>
</dbReference>
<dbReference type="InterPro" id="IPR001848">
    <property type="entry name" value="Ribosomal_uS10"/>
</dbReference>
<dbReference type="InterPro" id="IPR018268">
    <property type="entry name" value="Ribosomal_uS10_CS"/>
</dbReference>
<dbReference type="InterPro" id="IPR027486">
    <property type="entry name" value="Ribosomal_uS10_dom"/>
</dbReference>
<dbReference type="InterPro" id="IPR036838">
    <property type="entry name" value="Ribosomal_uS10_dom_sf"/>
</dbReference>
<dbReference type="InterPro" id="IPR005729">
    <property type="entry name" value="Ribosomal_uS10_euk/arc"/>
</dbReference>
<dbReference type="NCBIfam" id="TIGR01046">
    <property type="entry name" value="uS10_euk_arch"/>
    <property type="match status" value="1"/>
</dbReference>
<dbReference type="PANTHER" id="PTHR11700">
    <property type="entry name" value="30S RIBOSOMAL PROTEIN S10 FAMILY MEMBER"/>
    <property type="match status" value="1"/>
</dbReference>
<dbReference type="Pfam" id="PF00338">
    <property type="entry name" value="Ribosomal_S10"/>
    <property type="match status" value="1"/>
</dbReference>
<dbReference type="PRINTS" id="PR00971">
    <property type="entry name" value="RIBOSOMALS10"/>
</dbReference>
<dbReference type="SMART" id="SM01403">
    <property type="entry name" value="Ribosomal_S10"/>
    <property type="match status" value="1"/>
</dbReference>
<dbReference type="SUPFAM" id="SSF54999">
    <property type="entry name" value="Ribosomal protein S10"/>
    <property type="match status" value="1"/>
</dbReference>
<dbReference type="PROSITE" id="PS00361">
    <property type="entry name" value="RIBOSOMAL_S10"/>
    <property type="match status" value="1"/>
</dbReference>
<keyword id="KW-0687">Ribonucleoprotein</keyword>
<keyword id="KW-0689">Ribosomal protein</keyword>
<evidence type="ECO:0000255" key="1">
    <source>
        <dbReference type="HAMAP-Rule" id="MF_00508"/>
    </source>
</evidence>
<evidence type="ECO:0000305" key="2"/>
<name>RS10_METMJ</name>